<gene>
    <name evidence="1" type="primary">sepF</name>
    <name type="ordered locus">SAOUHSC_01154</name>
</gene>
<comment type="function">
    <text evidence="1">Cell division protein that is part of the divisome complex and is recruited early to the Z-ring. Probably stimulates Z-ring formation, perhaps through the cross-linking of FtsZ protofilaments. Its function overlaps with FtsA.</text>
</comment>
<comment type="subunit">
    <text evidence="1">Homodimer. Interacts with FtsZ.</text>
</comment>
<comment type="subcellular location">
    <subcellularLocation>
        <location evidence="1">Cytoplasm</location>
    </subcellularLocation>
    <text evidence="1">Localizes to the division site, in a FtsZ-dependent manner.</text>
</comment>
<comment type="similarity">
    <text evidence="1">Belongs to the SepF family.</text>
</comment>
<evidence type="ECO:0000255" key="1">
    <source>
        <dbReference type="HAMAP-Rule" id="MF_01197"/>
    </source>
</evidence>
<evidence type="ECO:0000256" key="2">
    <source>
        <dbReference type="SAM" id="MobiDB-lite"/>
    </source>
</evidence>
<keyword id="KW-0131">Cell cycle</keyword>
<keyword id="KW-0132">Cell division</keyword>
<keyword id="KW-0963">Cytoplasm</keyword>
<keyword id="KW-1185">Reference proteome</keyword>
<keyword id="KW-0717">Septation</keyword>
<dbReference type="EMBL" id="CP000253">
    <property type="protein sequence ID" value="ABD30263.1"/>
    <property type="molecule type" value="Genomic_DNA"/>
</dbReference>
<dbReference type="RefSeq" id="WP_000018608.1">
    <property type="nucleotide sequence ID" value="NZ_LS483365.1"/>
</dbReference>
<dbReference type="RefSeq" id="YP_499695.1">
    <property type="nucleotide sequence ID" value="NC_007795.1"/>
</dbReference>
<dbReference type="SMR" id="Q2FZ86"/>
<dbReference type="STRING" id="93061.SAOUHSC_01154"/>
<dbReference type="PaxDb" id="1280-SAXN108_1187"/>
<dbReference type="GeneID" id="3920713"/>
<dbReference type="KEGG" id="sao:SAOUHSC_01154"/>
<dbReference type="PATRIC" id="fig|93061.5.peg.1058"/>
<dbReference type="eggNOG" id="COG1799">
    <property type="taxonomic scope" value="Bacteria"/>
</dbReference>
<dbReference type="HOGENOM" id="CLU_078499_4_1_9"/>
<dbReference type="OrthoDB" id="9815206at2"/>
<dbReference type="Proteomes" id="UP000008816">
    <property type="component" value="Chromosome"/>
</dbReference>
<dbReference type="GO" id="GO:0005737">
    <property type="term" value="C:cytoplasm"/>
    <property type="evidence" value="ECO:0007669"/>
    <property type="project" value="UniProtKB-SubCell"/>
</dbReference>
<dbReference type="GO" id="GO:0000917">
    <property type="term" value="P:division septum assembly"/>
    <property type="evidence" value="ECO:0007669"/>
    <property type="project" value="UniProtKB-KW"/>
</dbReference>
<dbReference type="GO" id="GO:0043093">
    <property type="term" value="P:FtsZ-dependent cytokinesis"/>
    <property type="evidence" value="ECO:0007669"/>
    <property type="project" value="UniProtKB-UniRule"/>
</dbReference>
<dbReference type="Gene3D" id="3.30.110.150">
    <property type="entry name" value="SepF-like protein"/>
    <property type="match status" value="1"/>
</dbReference>
<dbReference type="HAMAP" id="MF_01197">
    <property type="entry name" value="SepF"/>
    <property type="match status" value="1"/>
</dbReference>
<dbReference type="InterPro" id="IPR023052">
    <property type="entry name" value="Cell_div_SepF"/>
</dbReference>
<dbReference type="InterPro" id="IPR007561">
    <property type="entry name" value="Cell_div_SepF/SepF-rel"/>
</dbReference>
<dbReference type="InterPro" id="IPR038594">
    <property type="entry name" value="SepF-like_sf"/>
</dbReference>
<dbReference type="PANTHER" id="PTHR35798">
    <property type="entry name" value="CELL DIVISION PROTEIN SEPF"/>
    <property type="match status" value="1"/>
</dbReference>
<dbReference type="PANTHER" id="PTHR35798:SF1">
    <property type="entry name" value="CELL DIVISION PROTEIN SEPF"/>
    <property type="match status" value="1"/>
</dbReference>
<dbReference type="Pfam" id="PF04472">
    <property type="entry name" value="SepF"/>
    <property type="match status" value="1"/>
</dbReference>
<name>SEPF_STAA8</name>
<sequence length="187" mass="21023">MSHLALKDLFSGFFVIDDEEEVEVPDKQQQVNEAPAKEQSQQTTKQNAIKSVPQKSASRYTTTSEERNNRMSNYSKNNSRNVVTMNNATPNNASQESSKMCLFEPRVFSDTQDIADELKNRRATLVNLQRIDKVSAKRIIDFLSGTVYAIGGDIQRVGTDIFLCTPDNVEVAGSITDHIENMEHSFD</sequence>
<proteinExistence type="inferred from homology"/>
<accession>Q2FZ86</accession>
<reference key="1">
    <citation type="book" date="2006" name="Gram positive pathogens, 2nd edition">
        <title>The Staphylococcus aureus NCTC 8325 genome.</title>
        <editorList>
            <person name="Fischetti V."/>
            <person name="Novick R."/>
            <person name="Ferretti J."/>
            <person name="Portnoy D."/>
            <person name="Rood J."/>
        </editorList>
        <authorList>
            <person name="Gillaspy A.F."/>
            <person name="Worrell V."/>
            <person name="Orvis J."/>
            <person name="Roe B.A."/>
            <person name="Dyer D.W."/>
            <person name="Iandolo J.J."/>
        </authorList>
    </citation>
    <scope>NUCLEOTIDE SEQUENCE [LARGE SCALE GENOMIC DNA]</scope>
    <source>
        <strain>NCTC 8325 / PS 47</strain>
    </source>
</reference>
<feature type="chain" id="PRO_0000334084" description="Cell division protein SepF">
    <location>
        <begin position="1"/>
        <end position="187"/>
    </location>
</feature>
<feature type="region of interest" description="Disordered" evidence="2">
    <location>
        <begin position="21"/>
        <end position="97"/>
    </location>
</feature>
<feature type="compositionally biased region" description="Polar residues" evidence="2">
    <location>
        <begin position="38"/>
        <end position="63"/>
    </location>
</feature>
<feature type="compositionally biased region" description="Polar residues" evidence="2">
    <location>
        <begin position="70"/>
        <end position="97"/>
    </location>
</feature>
<protein>
    <recommendedName>
        <fullName evidence="1">Cell division protein SepF</fullName>
    </recommendedName>
</protein>
<organism>
    <name type="scientific">Staphylococcus aureus (strain NCTC 8325 / PS 47)</name>
    <dbReference type="NCBI Taxonomy" id="93061"/>
    <lineage>
        <taxon>Bacteria</taxon>
        <taxon>Bacillati</taxon>
        <taxon>Bacillota</taxon>
        <taxon>Bacilli</taxon>
        <taxon>Bacillales</taxon>
        <taxon>Staphylococcaceae</taxon>
        <taxon>Staphylococcus</taxon>
    </lineage>
</organism>